<protein>
    <recommendedName>
        <fullName>Envelope glycoprotein gp160</fullName>
    </recommendedName>
    <alternativeName>
        <fullName>Env polyprotein</fullName>
    </alternativeName>
    <component>
        <recommendedName>
            <fullName>Surface protein gp120</fullName>
            <shortName>SU</shortName>
        </recommendedName>
        <alternativeName>
            <fullName>Glycoprotein 120</fullName>
            <shortName>gp120</shortName>
        </alternativeName>
    </component>
    <component>
        <recommendedName>
            <fullName>Transmembrane protein gp41</fullName>
            <shortName>TM</shortName>
        </recommendedName>
        <alternativeName>
            <fullName>Glycoprotein 32</fullName>
            <shortName>gp32</shortName>
        </alternativeName>
    </component>
</protein>
<reference key="1">
    <citation type="journal article" date="1987" name="Cell">
        <title>The genome organization of STLV-3 is similar to that of the AIDS virus except for a truncated transmembrane protein.</title>
        <authorList>
            <person name="Hirsch V."/>
            <person name="Riedel N."/>
            <person name="Mullins J.I."/>
        </authorList>
    </citation>
    <scope>NUCLEOTIDE SEQUENCE [GENOMIC RNA]</scope>
</reference>
<gene>
    <name type="primary">env</name>
</gene>
<organism>
    <name type="scientific">Simian immunodeficiency virus (isolate K78)</name>
    <name type="common">SIV-mac</name>
    <name type="synonym">Simian immunodeficiency virus rhesus monkey</name>
    <dbReference type="NCBI Taxonomy" id="11736"/>
    <lineage>
        <taxon>Viruses</taxon>
        <taxon>Riboviria</taxon>
        <taxon>Pararnavirae</taxon>
        <taxon>Artverviricota</taxon>
        <taxon>Revtraviricetes</taxon>
        <taxon>Ortervirales</taxon>
        <taxon>Retroviridae</taxon>
        <taxon>Orthoretrovirinae</taxon>
        <taxon>Lentivirus</taxon>
        <taxon>Simian immunodeficiency virus</taxon>
    </lineage>
</organism>
<name>ENV_SIVML</name>
<feature type="signal peptide" evidence="2">
    <location>
        <begin position="1"/>
        <end position="22"/>
    </location>
</feature>
<feature type="chain" id="PRO_0000239514" description="Envelope glycoprotein gp160">
    <location>
        <begin position="23"/>
        <end position="881"/>
    </location>
</feature>
<feature type="chain" id="PRO_0000038470" description="Surface protein gp120" evidence="1">
    <location>
        <begin position="23"/>
        <end position="527"/>
    </location>
</feature>
<feature type="chain" id="PRO_0000038471" description="Transmembrane protein gp41" evidence="1">
    <location>
        <begin position="528"/>
        <end position="881"/>
    </location>
</feature>
<feature type="topological domain" description="Extracellular" evidence="2">
    <location>
        <begin position="23"/>
        <end position="696"/>
    </location>
</feature>
<feature type="transmembrane region" description="Helical" evidence="2">
    <location>
        <begin position="697"/>
        <end position="717"/>
    </location>
</feature>
<feature type="topological domain" description="Cytoplasmic" evidence="2">
    <location>
        <begin position="718"/>
        <end position="881"/>
    </location>
</feature>
<feature type="region of interest" description="V1">
    <location>
        <begin position="113"/>
        <end position="169"/>
    </location>
</feature>
<feature type="region of interest" description="V2">
    <location>
        <begin position="170"/>
        <end position="213"/>
    </location>
</feature>
<feature type="region of interest" description="V3">
    <location>
        <begin position="313"/>
        <end position="345"/>
    </location>
</feature>
<feature type="region of interest" description="V4">
    <location>
        <begin position="404"/>
        <end position="434"/>
    </location>
</feature>
<feature type="region of interest" description="V5">
    <location>
        <begin position="477"/>
        <end position="484"/>
    </location>
</feature>
<feature type="region of interest" description="Fusion peptide" evidence="2">
    <location>
        <begin position="528"/>
        <end position="548"/>
    </location>
</feature>
<feature type="region of interest" description="Immunosuppression" evidence="1">
    <location>
        <begin position="591"/>
        <end position="607"/>
    </location>
</feature>
<feature type="region of interest" description="MPER; binding to GalCer" evidence="1">
    <location>
        <begin position="673"/>
        <end position="694"/>
    </location>
</feature>
<feature type="region of interest" description="Disordered" evidence="3">
    <location>
        <begin position="737"/>
        <end position="761"/>
    </location>
</feature>
<feature type="coiled-coil region" evidence="2">
    <location>
        <begin position="636"/>
        <end position="668"/>
    </location>
</feature>
<feature type="short sequence motif" description="YXXV motif; contains endocytosis signal" evidence="1">
    <location>
        <begin position="723"/>
        <end position="726"/>
    </location>
</feature>
<feature type="short sequence motif" description="Di-leucine internalization motif" evidence="1">
    <location>
        <begin position="880"/>
        <end position="881"/>
    </location>
</feature>
<feature type="site" description="Cleavage; by host furin" evidence="2">
    <location>
        <begin position="527"/>
        <end position="528"/>
    </location>
</feature>
<feature type="site" description="In-frame UAG termination codon">
    <location>
        <position position="736"/>
    </location>
</feature>
<feature type="lipid moiety-binding region" description="S-palmitoyl cysteine; by host" evidence="1">
    <location>
        <position position="789"/>
    </location>
</feature>
<feature type="glycosylation site" description="N-linked (GlcNAc...) asparagine; by host" evidence="2">
    <location>
        <position position="37"/>
    </location>
</feature>
<feature type="glycosylation site" description="N-linked (GlcNAc...) asparagine; by host" evidence="2">
    <location>
        <position position="70"/>
    </location>
</feature>
<feature type="glycosylation site" description="N-linked (GlcNAc...) asparagine; by host" evidence="2">
    <location>
        <position position="114"/>
    </location>
</feature>
<feature type="glycosylation site" description="N-linked (GlcNAc...) asparagine; by host" evidence="2">
    <location>
        <position position="148"/>
    </location>
</feature>
<feature type="glycosylation site" description="N-linked (GlcNAc...) asparagine; by host" evidence="2">
    <location>
        <position position="158"/>
    </location>
</feature>
<feature type="glycosylation site" description="N-linked (GlcNAc...) asparagine; by host" evidence="2">
    <location>
        <position position="173"/>
    </location>
</feature>
<feature type="glycosylation site" description="N-linked (GlcNAc...) asparagine; by host" evidence="2">
    <location>
        <position position="186"/>
    </location>
</feature>
<feature type="glycosylation site" description="N-linked (GlcNAc...) asparagine; by host" evidence="2">
    <location>
        <position position="200"/>
    </location>
</feature>
<feature type="glycosylation site" description="N-linked (GlcNAc...) asparagine; by host" evidence="2">
    <location>
        <position position="204"/>
    </location>
</feature>
<feature type="glycosylation site" description="N-linked (GlcNAc...) asparagine; by host" evidence="2">
    <location>
        <position position="214"/>
    </location>
</feature>
<feature type="glycosylation site" description="N-linked (GlcNAc...) asparagine; by host" evidence="2">
    <location>
        <position position="246"/>
    </location>
</feature>
<feature type="glycosylation site" description="N-linked (GlcNAc...) asparagine; by host" evidence="2">
    <location>
        <position position="249"/>
    </location>
</feature>
<feature type="glycosylation site" description="N-linked (GlcNAc...) asparagine; by host" evidence="2">
    <location>
        <position position="280"/>
    </location>
</feature>
<feature type="glycosylation site" description="N-linked (GlcNAc...) asparagine; by host" evidence="2">
    <location>
        <position position="286"/>
    </location>
</feature>
<feature type="glycosylation site" description="N-linked (GlcNAc...) asparagine; by host" evidence="2">
    <location>
        <position position="297"/>
    </location>
</feature>
<feature type="glycosylation site" description="N-linked (GlcNAc...) asparagine; by host" evidence="2">
    <location>
        <position position="308"/>
    </location>
</feature>
<feature type="glycosylation site" description="N-linked (GlcNAc...) asparagine; by host" evidence="2">
    <location>
        <position position="318"/>
    </location>
</feature>
<feature type="glycosylation site" description="N-linked (GlcNAc...) asparagine; by host" evidence="2">
    <location>
        <position position="373"/>
    </location>
</feature>
<feature type="glycosylation site" description="N-linked (GlcNAc...) asparagine; by host" evidence="2">
    <location>
        <position position="379"/>
    </location>
</feature>
<feature type="glycosylation site" description="N-linked (GlcNAc...) asparagine; by host" evidence="2">
    <location>
        <position position="462"/>
    </location>
</feature>
<feature type="glycosylation site" description="N-linked (GlcNAc...) asparagine; by host" evidence="2">
    <location>
        <position position="478"/>
    </location>
</feature>
<feature type="glycosylation site" description="N-linked (GlcNAc...) asparagine; by host" evidence="2">
    <location>
        <position position="627"/>
    </location>
</feature>
<feature type="glycosylation site" description="N-linked (GlcNAc...) asparagine; by host" evidence="2">
    <location>
        <position position="636"/>
    </location>
</feature>
<feature type="glycosylation site" description="N-linked (GlcNAc...) asparagine; by host" evidence="2">
    <location>
        <position position="652"/>
    </location>
</feature>
<feature type="disulfide bond" evidence="1">
    <location>
        <begin position="44"/>
        <end position="57"/>
    </location>
</feature>
<feature type="disulfide bond" evidence="1">
    <location>
        <begin position="101"/>
        <end position="222"/>
    </location>
</feature>
<feature type="disulfide bond" evidence="1">
    <location>
        <begin position="108"/>
        <end position="213"/>
    </location>
</feature>
<feature type="disulfide bond" evidence="1">
    <location>
        <begin position="113"/>
        <end position="170"/>
    </location>
</feature>
<feature type="disulfide bond" evidence="1">
    <location>
        <begin position="235"/>
        <end position="265"/>
    </location>
</feature>
<feature type="disulfide bond" evidence="1">
    <location>
        <begin position="245"/>
        <end position="257"/>
    </location>
</feature>
<feature type="disulfide bond" evidence="1">
    <location>
        <begin position="313"/>
        <end position="346"/>
    </location>
</feature>
<feature type="disulfide bond" evidence="1">
    <location>
        <begin position="397"/>
        <end position="461"/>
    </location>
</feature>
<feature type="disulfide bond" evidence="1">
    <location>
        <begin position="404"/>
        <end position="434"/>
    </location>
</feature>
<proteinExistence type="inferred from homology"/>
<accession>P11267</accession>
<sequence length="881" mass="101357">MGCLKNQLLIAILLLSVYGIYCTQYVTVFYGVPAWRNATIPLFCATKNRDTWGTTQCLPDNGDYSELALNVTESFDAWENTVTEQAIEDVWQLFETSIKPCVKLSPLCITMRCNKSETDRWGLTKSSTTITTAAPTSAPVSEKLDMVNETSSCIAQNNCTGLEQEQMISCKFNMTGLKRDKTKEYNETWYSTDLVCEQRNSTDNESRCYMNHCNTSVIQESCDKHYWDTIRFRYCAPPGYALLRCNDTNYSGFMPKCSKVVVSSCTRMMETQTSTWFGFNGTRAENRTYIYWHGRDNRTIISLNKYYNLTMKCRRPGNKTVLPVTIMSELVFHSQPINDRPKQAWCWFGGKWKDAIKEVKQTIVKHPRYTGTNNTDKINLTAPGGGDPEVTFMWTNCRGEFLYCKMNWFLNWVEDKDVTTQRPKERHRKNYVPCHIRQIINTWHKVGKNVYLPPREGDLTCNSTVTSLIANIDWTDGNQTSITMSAEVAELYRLELGDYKLVEITPIGLAPTDVKRYTTGGTSRNKRGVFVLGFLGFLATAGSAIGAVVVDVTAQSRTLLAGIVQQQQQLLDVVKRQQELLRLTVWGTKNLQTKVTAIEKYLKDQAQLNAWGCAFRQVCHITVPWPNASLTPDWNNDTWQEWERKVDFLEENITALLEEAQIQQEKNMYKLQKLNSWDVFGNWFDLASWIKYIQYGIYVVVGVILLRIVIYIVQMLAKLRQGYRPVFSSPPSYFQXTHTQQDPALPTREGKEGDGGEGGGNSSWPWQIEYIHFLIRQLIRLLTWLFSNCRTLLSRAYQILQPILQRLSATLRRIREVLRTELTYLQYGWSYFHEAVQAGWRSATETLAGAWGDLWETLRRGGRWILAIPRRIRQGLELTLL</sequence>
<evidence type="ECO:0000250" key="1"/>
<evidence type="ECO:0000255" key="2"/>
<evidence type="ECO:0000256" key="3">
    <source>
        <dbReference type="SAM" id="MobiDB-lite"/>
    </source>
</evidence>
<evidence type="ECO:0000305" key="4"/>
<comment type="function">
    <text evidence="1">The surface protein gp120 (SU) attaches the virus to the host lymphoid cell by binding to the primary receptor CD4. This interaction induces a structural rearrangement creating a high affinity binding site for a chemokine coreceptor like CCR5. This peculiar 2 stage receptor-interaction strategy allows gp120 to maintain the highly conserved coreceptor-binding site in a cryptic conformation, protected from neutralizing antibodies. These changes are transmitted to the transmembrane protein gp41 and are thought to activate its fusogenic potential by unmasking its fusion peptide (By similarity).</text>
</comment>
<comment type="function">
    <text evidence="1">Surface protein gp120 (SU) may target the virus to gut-associated lymphoid tissue (GALT) by binding host ITGA4/ITGB7 (alpha-4/beta-7 integrins), a complex that mediates T-cell migration to the GALT. Interaction between gp120 and ITGA4/ITGB7 would allow the virus to enter GALT early in the infection, infecting and killing most of GALT's resting CD4+ T-cells. This T-cell depletion is believed to be the major insult to the host immune system leading to AIDS (By similarity).</text>
</comment>
<comment type="function">
    <text evidence="1">The surface protein gp120 is a ligand for CD209/DC-SIGN and CLEC4M/DC-SIGNR, which are respectively found on dendritic cells (DCs), and on endothelial cells of liver sinusoids and lymph node sinuses. These interactions allow capture of viral particles at mucosal surfaces by these cells and subsequent transmission to permissive cells. DCs are professional antigen presenting cells, critical for host immunity by inducing specific immune responses against a broad variety of pathogens. They act as sentinels in various tissues where they take up antigen, process it, and present it to T-cells following migration to lymphoid organs. SIV subverts the migration properties of dendritic cells to gain access to CD4+ T-cells in lymph nodes. Virus transmission to permissive T-cells occurs either in trans (without DCs infection, through viral capture and transmission), or in cis (following DCs productive infection, through the usual CD4-gp120 interaction), thereby inducing a robust infection. In trans infection, bound virions remain infectious over days and it is proposed that they are not degraded, but protected in non-lysosomal acidic organelles within the DCs close to the cell membrane thus contributing to the viral infectious potential during DCs' migration from the periphery to the lymphoid tissues. On arrival at lymphoid tissues, intact virions recycle back to DCs' cell surface allowing virus transmission to CD4+ T-cells. Virion capture also seems to lead to MHC-II-restricted viral antigen presentation, and probably to the activation of SIV-specific CD4+ cells (By similarity).</text>
</comment>
<comment type="function">
    <text evidence="1">The transmembrane protein gp41 (TM) acts as a class I viral fusion protein. Under the current model, the protein has at least 3 conformational states: pre-fusion native state, pre-hairpin intermediate state, and post-fusion hairpin state. During fusion of viral and target intracellular membranes, the coiled coil regions (heptad repeats) assume a trimer-of-hairpins structure, positioning the fusion peptide in close proximity to the C-terminal region of the ectodomain. The formation of this structure appears to drive apposition and subsequent fusion of viral and target cell membranes. Complete fusion occurs in host cell endosomes. The virus undergoes clathrin-dependent internalization long before endosomal fusion, thus minimizing the surface exposure of conserved viral epitopes during fusion and reducing the efficacy of inhibitors targeting these epitopes. Membranes fusion leads to delivery of the nucleocapsid into the cytoplasm (By similarity).</text>
</comment>
<comment type="function">
    <text evidence="1">The envelope glycoprotein gp160 precursor down-modulates cell surface CD4 antigen by interacting with it in the endoplasmic reticulum and blocking its transport to the cell surface.</text>
</comment>
<comment type="function">
    <text evidence="1">The gp120-gp41 heterodimer allows rapid transcytosis of the virus through CD4 negative cells such as simple epithelial monolayers of the intestinal, rectal and endocervical epithelial barriers. Both gp120 and gp41 specifically recognize glycosphingolipids galactosyl-ceramide (GalCer) or 3' sulfo-galactosyl-ceramide (GalS) present in the lipid rafts structures of epithelial cells. Binding to these alternative receptors allows the rapid transcytosis of the virus through the epithelial cells. This transcytotic vesicle-mediated transport of virions from the apical side to the basolateral side of the epithelial cells does not involve infection of the cells themselves (By similarity).</text>
</comment>
<comment type="subunit">
    <molecule>Surface protein gp120</molecule>
    <text evidence="1">The mature envelope protein (Env) consists of a homotrimer of non-covalently associated gp120-gp41 heterodimers. The resulting complex protrudes from the virus surface as a spike. Interacts with host CD4 and CCR5 (By similarity). Gp120 also interacts with the C-type lectins CD209/DC-SIGN and CLEC4M/DC-SIGNR (collectively referred to as DC-SIGN(R)).</text>
</comment>
<comment type="subunit">
    <molecule>Transmembrane protein gp41</molecule>
    <text evidence="1">The mature envelope protein (Env) consists of a homotrimer of non-covalently associated gp120-gp41 heterodimers. The resulting complex protrudes from the virus surface as a spike.</text>
</comment>
<comment type="subcellular location">
    <molecule>Transmembrane protein gp41</molecule>
    <subcellularLocation>
        <location evidence="1">Virion membrane</location>
        <topology evidence="1">Single-pass type I membrane protein</topology>
    </subcellularLocation>
    <subcellularLocation>
        <location evidence="1">Host cell membrane</location>
        <topology evidence="1">Single-pass type I membrane protein</topology>
    </subcellularLocation>
    <subcellularLocation>
        <location evidence="4">Host endosome membrane</location>
        <topology evidence="4">Single-pass type I membrane protein</topology>
    </subcellularLocation>
    <text evidence="1">It is probably concentrated at the site of budding and incorporated into the virions possibly by contacts between the cytoplasmic tail of Env and the N-terminus of Gag.</text>
</comment>
<comment type="subcellular location">
    <molecule>Surface protein gp120</molecule>
    <subcellularLocation>
        <location evidence="1">Virion membrane</location>
        <topology evidence="1">Peripheral membrane protein</topology>
    </subcellularLocation>
    <subcellularLocation>
        <location evidence="1">Host cell membrane</location>
        <topology evidence="1">Peripheral membrane protein</topology>
    </subcellularLocation>
    <subcellularLocation>
        <location evidence="4">Host endosome membrane</location>
        <topology evidence="4">Peripheral membrane protein</topology>
    </subcellularLocation>
    <text evidence="1">The surface protein is not anchored to the viral envelope, but associates with the extravirion surface through its binding to TM. It is probably concentrated at the site of budding and incorporated into the virions possibly by contacts between the cytoplasmic tail of Env and the N-terminus of Gag (By similarity).</text>
</comment>
<comment type="domain">
    <text evidence="1">Some of the most genetically diverse regions of the viral genome are present in Env. They are called variable regions 1 through 5 (V1 through V5) (By similarity).</text>
</comment>
<comment type="domain">
    <text evidence="1">The 17 amino acids long immunosuppressive region is present in many retroviral envelope proteins. Synthetic peptides derived from this relatively conserved sequence inhibit immune function in vitro and in vivo (By similarity).</text>
</comment>
<comment type="PTM">
    <text evidence="1">Specific enzymatic cleavages in vivo yield mature proteins. Envelope glycoproteins are synthesized as an inactive precursor that is heavily N-glycosylated and processed likely by host cell furin in the Golgi to yield the mature SU and TM proteins. The cleavage site between SU and TM requires the minimal sequence [KR]-X-[KR]-R (By similarity).</text>
</comment>
<comment type="PTM">
    <text evidence="1">Palmitoylation of the transmembrane protein and of Env polyprotein (prior to its proteolytic cleavage) is essential for their association with host cell membrane lipid rafts. Palmitoylation is therefore required for envelope trafficking to classical lipid rafts, but not for viral replication (By similarity).</text>
</comment>
<comment type="miscellaneous">
    <text>This is a macaque isolate.</text>
</comment>
<organismHost>
    <name type="scientific">Cercopithecidae</name>
    <name type="common">Old World monkeys</name>
    <dbReference type="NCBI Taxonomy" id="9527"/>
</organismHost>
<keyword id="KW-0053">Apoptosis</keyword>
<keyword id="KW-0165">Cleavage on pair of basic residues</keyword>
<keyword id="KW-0175">Coiled coil</keyword>
<keyword id="KW-1015">Disulfide bond</keyword>
<keyword id="KW-1168">Fusion of virus membrane with host membrane</keyword>
<keyword id="KW-0325">Glycoprotein</keyword>
<keyword id="KW-1032">Host cell membrane</keyword>
<keyword id="KW-1039">Host endosome</keyword>
<keyword id="KW-1043">Host membrane</keyword>
<keyword id="KW-0945">Host-virus interaction</keyword>
<keyword id="KW-0449">Lipoprotein</keyword>
<keyword id="KW-0472">Membrane</keyword>
<keyword id="KW-0564">Palmitate</keyword>
<keyword id="KW-0732">Signal</keyword>
<keyword id="KW-0812">Transmembrane</keyword>
<keyword id="KW-1133">Transmembrane helix</keyword>
<keyword id="KW-1161">Viral attachment to host cell</keyword>
<keyword id="KW-0261">Viral envelope protein</keyword>
<keyword id="KW-1162">Viral penetration into host cytoplasm</keyword>
<keyword id="KW-0946">Virion</keyword>
<keyword id="KW-1160">Virus entry into host cell</keyword>
<dbReference type="PIR" id="C26737">
    <property type="entry name" value="VCLJS2"/>
</dbReference>
<dbReference type="GlyCosmos" id="P11267">
    <property type="glycosylation" value="24 sites, No reported glycans"/>
</dbReference>
<dbReference type="GO" id="GO:0044175">
    <property type="term" value="C:host cell endosome membrane"/>
    <property type="evidence" value="ECO:0007669"/>
    <property type="project" value="UniProtKB-SubCell"/>
</dbReference>
<dbReference type="GO" id="GO:0020002">
    <property type="term" value="C:host cell plasma membrane"/>
    <property type="evidence" value="ECO:0007669"/>
    <property type="project" value="UniProtKB-SubCell"/>
</dbReference>
<dbReference type="GO" id="GO:0016020">
    <property type="term" value="C:membrane"/>
    <property type="evidence" value="ECO:0007669"/>
    <property type="project" value="UniProtKB-KW"/>
</dbReference>
<dbReference type="GO" id="GO:0019031">
    <property type="term" value="C:viral envelope"/>
    <property type="evidence" value="ECO:0007669"/>
    <property type="project" value="UniProtKB-KW"/>
</dbReference>
<dbReference type="GO" id="GO:0055036">
    <property type="term" value="C:virion membrane"/>
    <property type="evidence" value="ECO:0007669"/>
    <property type="project" value="UniProtKB-SubCell"/>
</dbReference>
<dbReference type="GO" id="GO:0005198">
    <property type="term" value="F:structural molecule activity"/>
    <property type="evidence" value="ECO:0007669"/>
    <property type="project" value="InterPro"/>
</dbReference>
<dbReference type="GO" id="GO:0039663">
    <property type="term" value="P:membrane fusion involved in viral entry into host cell"/>
    <property type="evidence" value="ECO:0007669"/>
    <property type="project" value="UniProtKB-KW"/>
</dbReference>
<dbReference type="GO" id="GO:0046718">
    <property type="term" value="P:symbiont entry into host cell"/>
    <property type="evidence" value="ECO:0007669"/>
    <property type="project" value="UniProtKB-KW"/>
</dbReference>
<dbReference type="GO" id="GO:0019062">
    <property type="term" value="P:virion attachment to host cell"/>
    <property type="evidence" value="ECO:0007669"/>
    <property type="project" value="UniProtKB-KW"/>
</dbReference>
<dbReference type="CDD" id="cd09909">
    <property type="entry name" value="HIV-1-like_HR1-HR2"/>
    <property type="match status" value="1"/>
</dbReference>
<dbReference type="Gene3D" id="1.10.287.210">
    <property type="match status" value="1"/>
</dbReference>
<dbReference type="Gene3D" id="2.170.40.20">
    <property type="entry name" value="Human immunodeficiency virus 1, Gp160, envelope glycoprotein"/>
    <property type="match status" value="2"/>
</dbReference>
<dbReference type="InterPro" id="IPR036377">
    <property type="entry name" value="Gp120_core_sf"/>
</dbReference>
<dbReference type="InterPro" id="IPR000328">
    <property type="entry name" value="GP41-like"/>
</dbReference>
<dbReference type="InterPro" id="IPR000777">
    <property type="entry name" value="HIV1_Gp120"/>
</dbReference>
<dbReference type="Pfam" id="PF00516">
    <property type="entry name" value="GP120"/>
    <property type="match status" value="1"/>
</dbReference>
<dbReference type="Pfam" id="PF00517">
    <property type="entry name" value="GP41"/>
    <property type="match status" value="1"/>
</dbReference>
<dbReference type="SUPFAM" id="SSF56502">
    <property type="entry name" value="gp120 core"/>
    <property type="match status" value="1"/>
</dbReference>
<dbReference type="SUPFAM" id="SSF58069">
    <property type="entry name" value="Virus ectodomain"/>
    <property type="match status" value="1"/>
</dbReference>